<name>UPPP_CHLT3</name>
<dbReference type="EC" id="3.6.1.27" evidence="1"/>
<dbReference type="EMBL" id="CP001100">
    <property type="protein sequence ID" value="ACF13209.1"/>
    <property type="molecule type" value="Genomic_DNA"/>
</dbReference>
<dbReference type="RefSeq" id="WP_012499293.1">
    <property type="nucleotide sequence ID" value="NC_011026.1"/>
</dbReference>
<dbReference type="SMR" id="B3QW96"/>
<dbReference type="STRING" id="517418.Ctha_0740"/>
<dbReference type="KEGG" id="cts:Ctha_0740"/>
<dbReference type="eggNOG" id="COG1968">
    <property type="taxonomic scope" value="Bacteria"/>
</dbReference>
<dbReference type="HOGENOM" id="CLU_060296_1_0_10"/>
<dbReference type="OrthoDB" id="9808289at2"/>
<dbReference type="Proteomes" id="UP000001208">
    <property type="component" value="Chromosome"/>
</dbReference>
<dbReference type="GO" id="GO:0005886">
    <property type="term" value="C:plasma membrane"/>
    <property type="evidence" value="ECO:0007669"/>
    <property type="project" value="UniProtKB-SubCell"/>
</dbReference>
<dbReference type="GO" id="GO:0050380">
    <property type="term" value="F:undecaprenyl-diphosphatase activity"/>
    <property type="evidence" value="ECO:0007669"/>
    <property type="project" value="UniProtKB-UniRule"/>
</dbReference>
<dbReference type="GO" id="GO:0071555">
    <property type="term" value="P:cell wall organization"/>
    <property type="evidence" value="ECO:0007669"/>
    <property type="project" value="UniProtKB-KW"/>
</dbReference>
<dbReference type="GO" id="GO:0009252">
    <property type="term" value="P:peptidoglycan biosynthetic process"/>
    <property type="evidence" value="ECO:0007669"/>
    <property type="project" value="UniProtKB-KW"/>
</dbReference>
<dbReference type="GO" id="GO:0008360">
    <property type="term" value="P:regulation of cell shape"/>
    <property type="evidence" value="ECO:0007669"/>
    <property type="project" value="UniProtKB-KW"/>
</dbReference>
<dbReference type="GO" id="GO:0046677">
    <property type="term" value="P:response to antibiotic"/>
    <property type="evidence" value="ECO:0007669"/>
    <property type="project" value="UniProtKB-UniRule"/>
</dbReference>
<dbReference type="HAMAP" id="MF_01006">
    <property type="entry name" value="Undec_diphosphatase"/>
    <property type="match status" value="1"/>
</dbReference>
<dbReference type="InterPro" id="IPR003824">
    <property type="entry name" value="UppP"/>
</dbReference>
<dbReference type="NCBIfam" id="NF001392">
    <property type="entry name" value="PRK00281.2-1"/>
    <property type="match status" value="1"/>
</dbReference>
<dbReference type="NCBIfam" id="TIGR00753">
    <property type="entry name" value="undec_PP_bacA"/>
    <property type="match status" value="1"/>
</dbReference>
<dbReference type="PANTHER" id="PTHR30622">
    <property type="entry name" value="UNDECAPRENYL-DIPHOSPHATASE"/>
    <property type="match status" value="1"/>
</dbReference>
<dbReference type="PANTHER" id="PTHR30622:SF4">
    <property type="entry name" value="UNDECAPRENYL-DIPHOSPHATASE"/>
    <property type="match status" value="1"/>
</dbReference>
<dbReference type="Pfam" id="PF02673">
    <property type="entry name" value="BacA"/>
    <property type="match status" value="1"/>
</dbReference>
<organism>
    <name type="scientific">Chloroherpeton thalassium (strain ATCC 35110 / GB-78)</name>
    <dbReference type="NCBI Taxonomy" id="517418"/>
    <lineage>
        <taxon>Bacteria</taxon>
        <taxon>Pseudomonadati</taxon>
        <taxon>Chlorobiota</taxon>
        <taxon>Chlorobiia</taxon>
        <taxon>Chlorobiales</taxon>
        <taxon>Chloroherpetonaceae</taxon>
        <taxon>Chloroherpeton</taxon>
    </lineage>
</organism>
<keyword id="KW-0046">Antibiotic resistance</keyword>
<keyword id="KW-0997">Cell inner membrane</keyword>
<keyword id="KW-1003">Cell membrane</keyword>
<keyword id="KW-0133">Cell shape</keyword>
<keyword id="KW-0961">Cell wall biogenesis/degradation</keyword>
<keyword id="KW-0378">Hydrolase</keyword>
<keyword id="KW-0472">Membrane</keyword>
<keyword id="KW-0573">Peptidoglycan synthesis</keyword>
<keyword id="KW-1185">Reference proteome</keyword>
<keyword id="KW-0812">Transmembrane</keyword>
<keyword id="KW-1133">Transmembrane helix</keyword>
<proteinExistence type="inferred from homology"/>
<sequence>MDIIQAIVLGIIQGLTEFLPISSSAHLRIFPALLGWDDPGAAFTAIIQIGTLAAVLIYFYQDILRITSATISGLVNRNPFGSQDSRMGWMISAGTIPIVVLGLLFKKNIETTFRSLYIISGSLILLALVLMYAEYLVKKREARGEKMLSLDKVDWKEAIIIGLAQSLALIPGSSRSGTTITGGLFLGMTRETAARFSFLLSLPAVFAAGVYQLLKVWPELMASGDELVNLTVATVVSGVIGYASIAFLLDYLKKHSTYLFIIYRILLGVFLLAMLSMGKLEAF</sequence>
<reference key="1">
    <citation type="submission" date="2008-06" db="EMBL/GenBank/DDBJ databases">
        <title>Complete sequence of Chloroherpeton thalassium ATCC 35110.</title>
        <authorList>
            <consortium name="US DOE Joint Genome Institute"/>
            <person name="Lucas S."/>
            <person name="Copeland A."/>
            <person name="Lapidus A."/>
            <person name="Glavina del Rio T."/>
            <person name="Dalin E."/>
            <person name="Tice H."/>
            <person name="Bruce D."/>
            <person name="Goodwin L."/>
            <person name="Pitluck S."/>
            <person name="Schmutz J."/>
            <person name="Larimer F."/>
            <person name="Land M."/>
            <person name="Hauser L."/>
            <person name="Kyrpides N."/>
            <person name="Mikhailova N."/>
            <person name="Liu Z."/>
            <person name="Li T."/>
            <person name="Zhao F."/>
            <person name="Overmann J."/>
            <person name="Bryant D.A."/>
            <person name="Richardson P."/>
        </authorList>
    </citation>
    <scope>NUCLEOTIDE SEQUENCE [LARGE SCALE GENOMIC DNA]</scope>
    <source>
        <strain>ATCC 35110 / GB-78</strain>
    </source>
</reference>
<comment type="function">
    <text evidence="1">Catalyzes the dephosphorylation of undecaprenyl diphosphate (UPP). Confers resistance to bacitracin.</text>
</comment>
<comment type="catalytic activity">
    <reaction evidence="1">
        <text>di-trans,octa-cis-undecaprenyl diphosphate + H2O = di-trans,octa-cis-undecaprenyl phosphate + phosphate + H(+)</text>
        <dbReference type="Rhea" id="RHEA:28094"/>
        <dbReference type="ChEBI" id="CHEBI:15377"/>
        <dbReference type="ChEBI" id="CHEBI:15378"/>
        <dbReference type="ChEBI" id="CHEBI:43474"/>
        <dbReference type="ChEBI" id="CHEBI:58405"/>
        <dbReference type="ChEBI" id="CHEBI:60392"/>
        <dbReference type="EC" id="3.6.1.27"/>
    </reaction>
</comment>
<comment type="subcellular location">
    <subcellularLocation>
        <location evidence="1">Cell inner membrane</location>
        <topology evidence="1">Multi-pass membrane protein</topology>
    </subcellularLocation>
</comment>
<comment type="miscellaneous">
    <text>Bacitracin is thought to be involved in the inhibition of peptidoglycan synthesis by sequestering undecaprenyl diphosphate, thereby reducing the pool of lipid carrier available.</text>
</comment>
<comment type="similarity">
    <text evidence="1">Belongs to the UppP family.</text>
</comment>
<gene>
    <name evidence="1" type="primary">uppP</name>
    <name type="ordered locus">Ctha_0740</name>
</gene>
<feature type="chain" id="PRO_1000197359" description="Undecaprenyl-diphosphatase">
    <location>
        <begin position="1"/>
        <end position="283"/>
    </location>
</feature>
<feature type="transmembrane region" description="Helical" evidence="1">
    <location>
        <begin position="1"/>
        <end position="21"/>
    </location>
</feature>
<feature type="transmembrane region" description="Helical" evidence="1">
    <location>
        <begin position="40"/>
        <end position="60"/>
    </location>
</feature>
<feature type="transmembrane region" description="Helical" evidence="1">
    <location>
        <begin position="85"/>
        <end position="105"/>
    </location>
</feature>
<feature type="transmembrane region" description="Helical" evidence="1">
    <location>
        <begin position="117"/>
        <end position="137"/>
    </location>
</feature>
<feature type="transmembrane region" description="Helical" evidence="1">
    <location>
        <begin position="196"/>
        <end position="216"/>
    </location>
</feature>
<feature type="transmembrane region" description="Helical" evidence="1">
    <location>
        <begin position="232"/>
        <end position="252"/>
    </location>
</feature>
<feature type="transmembrane region" description="Helical" evidence="1">
    <location>
        <begin position="258"/>
        <end position="278"/>
    </location>
</feature>
<accession>B3QW96</accession>
<evidence type="ECO:0000255" key="1">
    <source>
        <dbReference type="HAMAP-Rule" id="MF_01006"/>
    </source>
</evidence>
<protein>
    <recommendedName>
        <fullName evidence="1">Undecaprenyl-diphosphatase</fullName>
        <ecNumber evidence="1">3.6.1.27</ecNumber>
    </recommendedName>
    <alternativeName>
        <fullName evidence="1">Bacitracin resistance protein</fullName>
    </alternativeName>
    <alternativeName>
        <fullName evidence="1">Undecaprenyl pyrophosphate phosphatase</fullName>
    </alternativeName>
</protein>